<organism>
    <name type="scientific">Wigglesworthia glossinidia brevipalpis</name>
    <dbReference type="NCBI Taxonomy" id="36870"/>
    <lineage>
        <taxon>Bacteria</taxon>
        <taxon>Pseudomonadati</taxon>
        <taxon>Pseudomonadota</taxon>
        <taxon>Gammaproteobacteria</taxon>
        <taxon>Enterobacterales</taxon>
        <taxon>Erwiniaceae</taxon>
        <taxon>Wigglesworthia</taxon>
    </lineage>
</organism>
<gene>
    <name evidence="1" type="primary">kup</name>
    <name type="ordered locus">WIGBR6080</name>
</gene>
<dbReference type="EMBL" id="BA000021">
    <property type="protein sequence ID" value="BAC24754.1"/>
    <property type="molecule type" value="Genomic_DNA"/>
</dbReference>
<dbReference type="STRING" id="36870.gene:10369126"/>
<dbReference type="KEGG" id="wbr:kup"/>
<dbReference type="eggNOG" id="COG3158">
    <property type="taxonomic scope" value="Bacteria"/>
</dbReference>
<dbReference type="HOGENOM" id="CLU_008142_4_2_6"/>
<dbReference type="OrthoDB" id="9805577at2"/>
<dbReference type="Proteomes" id="UP000000562">
    <property type="component" value="Chromosome"/>
</dbReference>
<dbReference type="GO" id="GO:0005886">
    <property type="term" value="C:plasma membrane"/>
    <property type="evidence" value="ECO:0007669"/>
    <property type="project" value="UniProtKB-SubCell"/>
</dbReference>
<dbReference type="GO" id="GO:0015079">
    <property type="term" value="F:potassium ion transmembrane transporter activity"/>
    <property type="evidence" value="ECO:0007669"/>
    <property type="project" value="UniProtKB-UniRule"/>
</dbReference>
<dbReference type="GO" id="GO:0015293">
    <property type="term" value="F:symporter activity"/>
    <property type="evidence" value="ECO:0007669"/>
    <property type="project" value="UniProtKB-UniRule"/>
</dbReference>
<dbReference type="HAMAP" id="MF_01522">
    <property type="entry name" value="Kup"/>
    <property type="match status" value="1"/>
</dbReference>
<dbReference type="InterPro" id="IPR003855">
    <property type="entry name" value="K+_transporter"/>
</dbReference>
<dbReference type="InterPro" id="IPR053952">
    <property type="entry name" value="K_trans_C"/>
</dbReference>
<dbReference type="InterPro" id="IPR053951">
    <property type="entry name" value="K_trans_N"/>
</dbReference>
<dbReference type="InterPro" id="IPR023051">
    <property type="entry name" value="Kup"/>
</dbReference>
<dbReference type="PANTHER" id="PTHR30540:SF79">
    <property type="entry name" value="LOW AFFINITY POTASSIUM TRANSPORT SYSTEM PROTEIN KUP"/>
    <property type="match status" value="1"/>
</dbReference>
<dbReference type="PANTHER" id="PTHR30540">
    <property type="entry name" value="OSMOTIC STRESS POTASSIUM TRANSPORTER"/>
    <property type="match status" value="1"/>
</dbReference>
<dbReference type="Pfam" id="PF02705">
    <property type="entry name" value="K_trans"/>
    <property type="match status" value="1"/>
</dbReference>
<dbReference type="Pfam" id="PF22776">
    <property type="entry name" value="K_trans_C"/>
    <property type="match status" value="1"/>
</dbReference>
<feature type="chain" id="PRO_0000209067" description="Low affinity potassium transport system protein Kup">
    <location>
        <begin position="1"/>
        <end position="625"/>
    </location>
</feature>
<feature type="transmembrane region" description="Helical" evidence="1">
    <location>
        <begin position="15"/>
        <end position="35"/>
    </location>
</feature>
<feature type="transmembrane region" description="Helical" evidence="1">
    <location>
        <begin position="58"/>
        <end position="78"/>
    </location>
</feature>
<feature type="transmembrane region" description="Helical" evidence="1">
    <location>
        <begin position="103"/>
        <end position="123"/>
    </location>
</feature>
<feature type="transmembrane region" description="Helical" evidence="1">
    <location>
        <begin position="140"/>
        <end position="160"/>
    </location>
</feature>
<feature type="transmembrane region" description="Helical" evidence="1">
    <location>
        <begin position="171"/>
        <end position="191"/>
    </location>
</feature>
<feature type="transmembrane region" description="Helical" evidence="1">
    <location>
        <begin position="218"/>
        <end position="238"/>
    </location>
</feature>
<feature type="transmembrane region" description="Helical" evidence="1">
    <location>
        <begin position="251"/>
        <end position="271"/>
    </location>
</feature>
<feature type="transmembrane region" description="Helical" evidence="1">
    <location>
        <begin position="282"/>
        <end position="302"/>
    </location>
</feature>
<feature type="transmembrane region" description="Helical" evidence="1">
    <location>
        <begin position="340"/>
        <end position="360"/>
    </location>
</feature>
<feature type="transmembrane region" description="Helical" evidence="1">
    <location>
        <begin position="366"/>
        <end position="386"/>
    </location>
</feature>
<feature type="transmembrane region" description="Helical" evidence="1">
    <location>
        <begin position="396"/>
        <end position="416"/>
    </location>
</feature>
<feature type="transmembrane region" description="Helical" evidence="1">
    <location>
        <begin position="422"/>
        <end position="442"/>
    </location>
</feature>
<comment type="function">
    <text evidence="1">Responsible for the low-affinity transport of potassium into the cell. Likely operates as a K(+):H(+) symporter.</text>
</comment>
<comment type="catalytic activity">
    <reaction evidence="1">
        <text>K(+)(in) + H(+)(in) = K(+)(out) + H(+)(out)</text>
        <dbReference type="Rhea" id="RHEA:28490"/>
        <dbReference type="ChEBI" id="CHEBI:15378"/>
        <dbReference type="ChEBI" id="CHEBI:29103"/>
    </reaction>
    <physiologicalReaction direction="right-to-left" evidence="1">
        <dbReference type="Rhea" id="RHEA:28492"/>
    </physiologicalReaction>
</comment>
<comment type="subcellular location">
    <subcellularLocation>
        <location evidence="1">Cell membrane</location>
        <topology evidence="1">Multi-pass membrane protein</topology>
    </subcellularLocation>
</comment>
<comment type="similarity">
    <text evidence="1">Belongs to the HAK/KUP transporter (TC 2.A.72) family.</text>
</comment>
<protein>
    <recommendedName>
        <fullName evidence="1">Low affinity potassium transport system protein Kup</fullName>
    </recommendedName>
    <alternativeName>
        <fullName evidence="1">Kup system potassium uptake protein</fullName>
    </alternativeName>
</protein>
<accession>Q8D1U8</accession>
<proteinExistence type="inferred from homology"/>
<sequence>MNMIKKNKKKSFLCTIFSTINVLHGLIAISPIYIIKESFVNNLGFKIDKLAIFGILSIIFWTLFFIIFLKYLILIVSINNSGEGGILTLMSITAKKINSKSTFVIVILGLISMCLFFGDIIIIPSISIISVIEEISIYYLSFEKFIFIISIAIFTFLFFIQKKIKNEFNNIFSFLISIWFILVGLIGLKGIYINPEILLAINPKYLINFFKHYKLNAFFVFGTLILLISISEILYINIGRFSKLEIRKSWLFFVFPMIMINCFGQGSIILLYPESISHPFFFLVPDWARFFTFTFAIIISIISSQNIISSIFYLTRQAVRLGYLPNIKIFYTSEVKSRRIYIPCINWIFYLSAVIQISIFKNLHNLILIYGIGSIITMSLTTFFSLLFFKKKFEKFKILKITFLLTILILEFFIFISNSYKIICGGWFPIVFGIIFFTIMITWKVETFNLLLHTHNNSNSIKLFIKNLRKNNLLKVNGTSVFMSSMDNTIPLSIIHNIKHNKVLHEKIIFLNIKTEDSPFIKKECRVEIEKLNNGFWGVKAYYGFKETPDIKEIFHFCNLLGISLNIMETSFFISHESLILGKRPWYLAIRAKLFIFLKRNSLGSTYQYSIPLDRVIALGIQVKI</sequence>
<reference key="1">
    <citation type="journal article" date="2002" name="Nat. Genet.">
        <title>Genome sequence of the endocellular obligate symbiont of tsetse flies, Wigglesworthia glossinidia.</title>
        <authorList>
            <person name="Akman L."/>
            <person name="Yamashita A."/>
            <person name="Watanabe H."/>
            <person name="Oshima K."/>
            <person name="Shiba T."/>
            <person name="Hattori M."/>
            <person name="Aksoy S."/>
        </authorList>
    </citation>
    <scope>NUCLEOTIDE SEQUENCE [LARGE SCALE GENOMIC DNA]</scope>
</reference>
<evidence type="ECO:0000255" key="1">
    <source>
        <dbReference type="HAMAP-Rule" id="MF_01522"/>
    </source>
</evidence>
<keyword id="KW-1003">Cell membrane</keyword>
<keyword id="KW-0406">Ion transport</keyword>
<keyword id="KW-0472">Membrane</keyword>
<keyword id="KW-0630">Potassium</keyword>
<keyword id="KW-0633">Potassium transport</keyword>
<keyword id="KW-1185">Reference proteome</keyword>
<keyword id="KW-0769">Symport</keyword>
<keyword id="KW-0812">Transmembrane</keyword>
<keyword id="KW-1133">Transmembrane helix</keyword>
<keyword id="KW-0813">Transport</keyword>
<name>KUP_WIGBR</name>